<reference key="1">
    <citation type="journal article" date="2009" name="Appl. Environ. Microbiol.">
        <title>Three genomes from the phylum Acidobacteria provide insight into the lifestyles of these microorganisms in soils.</title>
        <authorList>
            <person name="Ward N.L."/>
            <person name="Challacombe J.F."/>
            <person name="Janssen P.H."/>
            <person name="Henrissat B."/>
            <person name="Coutinho P.M."/>
            <person name="Wu M."/>
            <person name="Xie G."/>
            <person name="Haft D.H."/>
            <person name="Sait M."/>
            <person name="Badger J."/>
            <person name="Barabote R.D."/>
            <person name="Bradley B."/>
            <person name="Brettin T.S."/>
            <person name="Brinkac L.M."/>
            <person name="Bruce D."/>
            <person name="Creasy T."/>
            <person name="Daugherty S.C."/>
            <person name="Davidsen T.M."/>
            <person name="DeBoy R.T."/>
            <person name="Detter J.C."/>
            <person name="Dodson R.J."/>
            <person name="Durkin A.S."/>
            <person name="Ganapathy A."/>
            <person name="Gwinn-Giglio M."/>
            <person name="Han C.S."/>
            <person name="Khouri H."/>
            <person name="Kiss H."/>
            <person name="Kothari S.P."/>
            <person name="Madupu R."/>
            <person name="Nelson K.E."/>
            <person name="Nelson W.C."/>
            <person name="Paulsen I."/>
            <person name="Penn K."/>
            <person name="Ren Q."/>
            <person name="Rosovitz M.J."/>
            <person name="Selengut J.D."/>
            <person name="Shrivastava S."/>
            <person name="Sullivan S.A."/>
            <person name="Tapia R."/>
            <person name="Thompson L.S."/>
            <person name="Watkins K.L."/>
            <person name="Yang Q."/>
            <person name="Yu C."/>
            <person name="Zafar N."/>
            <person name="Zhou L."/>
            <person name="Kuske C.R."/>
        </authorList>
    </citation>
    <scope>NUCLEOTIDE SEQUENCE [LARGE SCALE GENOMIC DNA]</scope>
    <source>
        <strain>Ellin345</strain>
    </source>
</reference>
<evidence type="ECO:0000255" key="1">
    <source>
        <dbReference type="HAMAP-Rule" id="MF_00097"/>
    </source>
</evidence>
<keyword id="KW-0460">Magnesium</keyword>
<keyword id="KW-0479">Metal-binding</keyword>
<keyword id="KW-1185">Reference proteome</keyword>
<keyword id="KW-0784">Thiamine biosynthesis</keyword>
<keyword id="KW-0808">Transferase</keyword>
<sequence>MASGLKLPRLYAIVDADCFGPEPSLATLTHFAKELVAGGVTLLQYRNKQGSAREILSHARELKRALPPEVTLLLNDRADLAIAAGFHGVHVGQDDLSPEGARLVVGPEMFVGTSTHNPEQLQIADKATVDYLAIGPIFATKSKINPDPVVGLDRLRAVRKLTSKPLVAIGGITRENCRSVIDAGADSVAVIADLLVDPRQRASEFLQILHS</sequence>
<feature type="chain" id="PRO_0000336367" description="Thiamine-phosphate synthase">
    <location>
        <begin position="1"/>
        <end position="211"/>
    </location>
</feature>
<feature type="binding site" evidence="1">
    <location>
        <begin position="44"/>
        <end position="48"/>
    </location>
    <ligand>
        <name>4-amino-2-methyl-5-(diphosphooxymethyl)pyrimidine</name>
        <dbReference type="ChEBI" id="CHEBI:57841"/>
    </ligand>
</feature>
<feature type="binding site" evidence="1">
    <location>
        <position position="75"/>
    </location>
    <ligand>
        <name>4-amino-2-methyl-5-(diphosphooxymethyl)pyrimidine</name>
        <dbReference type="ChEBI" id="CHEBI:57841"/>
    </ligand>
</feature>
<feature type="binding site" evidence="1">
    <location>
        <position position="76"/>
    </location>
    <ligand>
        <name>Mg(2+)</name>
        <dbReference type="ChEBI" id="CHEBI:18420"/>
    </ligand>
</feature>
<feature type="binding site" evidence="1">
    <location>
        <position position="95"/>
    </location>
    <ligand>
        <name>Mg(2+)</name>
        <dbReference type="ChEBI" id="CHEBI:18420"/>
    </ligand>
</feature>
<feature type="binding site" evidence="1">
    <location>
        <position position="114"/>
    </location>
    <ligand>
        <name>4-amino-2-methyl-5-(diphosphooxymethyl)pyrimidine</name>
        <dbReference type="ChEBI" id="CHEBI:57841"/>
    </ligand>
</feature>
<feature type="binding site" evidence="1">
    <location>
        <begin position="140"/>
        <end position="142"/>
    </location>
    <ligand>
        <name>2-[(2R,5Z)-2-carboxy-4-methylthiazol-5(2H)-ylidene]ethyl phosphate</name>
        <dbReference type="ChEBI" id="CHEBI:62899"/>
    </ligand>
</feature>
<feature type="binding site" evidence="1">
    <location>
        <position position="143"/>
    </location>
    <ligand>
        <name>4-amino-2-methyl-5-(diphosphooxymethyl)pyrimidine</name>
        <dbReference type="ChEBI" id="CHEBI:57841"/>
    </ligand>
</feature>
<feature type="binding site" evidence="1">
    <location>
        <position position="171"/>
    </location>
    <ligand>
        <name>2-[(2R,5Z)-2-carboxy-4-methylthiazol-5(2H)-ylidene]ethyl phosphate</name>
        <dbReference type="ChEBI" id="CHEBI:62899"/>
    </ligand>
</feature>
<protein>
    <recommendedName>
        <fullName evidence="1">Thiamine-phosphate synthase</fullName>
        <shortName evidence="1">TP synthase</shortName>
        <shortName evidence="1">TPS</shortName>
        <ecNumber evidence="1">2.5.1.3</ecNumber>
    </recommendedName>
    <alternativeName>
        <fullName evidence="1">Thiamine-phosphate pyrophosphorylase</fullName>
        <shortName evidence="1">TMP pyrophosphorylase</shortName>
        <shortName evidence="1">TMP-PPase</shortName>
    </alternativeName>
</protein>
<organism>
    <name type="scientific">Koribacter versatilis (strain Ellin345)</name>
    <dbReference type="NCBI Taxonomy" id="204669"/>
    <lineage>
        <taxon>Bacteria</taxon>
        <taxon>Pseudomonadati</taxon>
        <taxon>Acidobacteriota</taxon>
        <taxon>Terriglobia</taxon>
        <taxon>Terriglobales</taxon>
        <taxon>Candidatus Korobacteraceae</taxon>
        <taxon>Candidatus Korobacter</taxon>
    </lineage>
</organism>
<accession>Q1ILG3</accession>
<comment type="function">
    <text evidence="1">Condenses 4-methyl-5-(beta-hydroxyethyl)thiazole monophosphate (THZ-P) and 2-methyl-4-amino-5-hydroxymethyl pyrimidine pyrophosphate (HMP-PP) to form thiamine monophosphate (TMP).</text>
</comment>
<comment type="catalytic activity">
    <reaction evidence="1">
        <text>2-[(2R,5Z)-2-carboxy-4-methylthiazol-5(2H)-ylidene]ethyl phosphate + 4-amino-2-methyl-5-(diphosphooxymethyl)pyrimidine + 2 H(+) = thiamine phosphate + CO2 + diphosphate</text>
        <dbReference type="Rhea" id="RHEA:47844"/>
        <dbReference type="ChEBI" id="CHEBI:15378"/>
        <dbReference type="ChEBI" id="CHEBI:16526"/>
        <dbReference type="ChEBI" id="CHEBI:33019"/>
        <dbReference type="ChEBI" id="CHEBI:37575"/>
        <dbReference type="ChEBI" id="CHEBI:57841"/>
        <dbReference type="ChEBI" id="CHEBI:62899"/>
        <dbReference type="EC" id="2.5.1.3"/>
    </reaction>
</comment>
<comment type="catalytic activity">
    <reaction evidence="1">
        <text>2-(2-carboxy-4-methylthiazol-5-yl)ethyl phosphate + 4-amino-2-methyl-5-(diphosphooxymethyl)pyrimidine + 2 H(+) = thiamine phosphate + CO2 + diphosphate</text>
        <dbReference type="Rhea" id="RHEA:47848"/>
        <dbReference type="ChEBI" id="CHEBI:15378"/>
        <dbReference type="ChEBI" id="CHEBI:16526"/>
        <dbReference type="ChEBI" id="CHEBI:33019"/>
        <dbReference type="ChEBI" id="CHEBI:37575"/>
        <dbReference type="ChEBI" id="CHEBI:57841"/>
        <dbReference type="ChEBI" id="CHEBI:62890"/>
        <dbReference type="EC" id="2.5.1.3"/>
    </reaction>
</comment>
<comment type="catalytic activity">
    <reaction evidence="1">
        <text>4-methyl-5-(2-phosphooxyethyl)-thiazole + 4-amino-2-methyl-5-(diphosphooxymethyl)pyrimidine + H(+) = thiamine phosphate + diphosphate</text>
        <dbReference type="Rhea" id="RHEA:22328"/>
        <dbReference type="ChEBI" id="CHEBI:15378"/>
        <dbReference type="ChEBI" id="CHEBI:33019"/>
        <dbReference type="ChEBI" id="CHEBI:37575"/>
        <dbReference type="ChEBI" id="CHEBI:57841"/>
        <dbReference type="ChEBI" id="CHEBI:58296"/>
        <dbReference type="EC" id="2.5.1.3"/>
    </reaction>
</comment>
<comment type="cofactor">
    <cofactor evidence="1">
        <name>Mg(2+)</name>
        <dbReference type="ChEBI" id="CHEBI:18420"/>
    </cofactor>
    <text evidence="1">Binds 1 Mg(2+) ion per subunit.</text>
</comment>
<comment type="pathway">
    <text evidence="1">Cofactor biosynthesis; thiamine diphosphate biosynthesis; thiamine phosphate from 4-amino-2-methyl-5-diphosphomethylpyrimidine and 4-methyl-5-(2-phosphoethyl)-thiazole: step 1/1.</text>
</comment>
<comment type="similarity">
    <text evidence="1">Belongs to the thiamine-phosphate synthase family.</text>
</comment>
<proteinExistence type="inferred from homology"/>
<name>THIE_KORVE</name>
<gene>
    <name evidence="1" type="primary">thiE</name>
    <name type="ordered locus">Acid345_3286</name>
</gene>
<dbReference type="EC" id="2.5.1.3" evidence="1"/>
<dbReference type="EMBL" id="CP000360">
    <property type="protein sequence ID" value="ABF42287.1"/>
    <property type="molecule type" value="Genomic_DNA"/>
</dbReference>
<dbReference type="RefSeq" id="WP_011524086.1">
    <property type="nucleotide sequence ID" value="NC_008009.1"/>
</dbReference>
<dbReference type="SMR" id="Q1ILG3"/>
<dbReference type="STRING" id="204669.Acid345_3286"/>
<dbReference type="EnsemblBacteria" id="ABF42287">
    <property type="protein sequence ID" value="ABF42287"/>
    <property type="gene ID" value="Acid345_3286"/>
</dbReference>
<dbReference type="KEGG" id="aba:Acid345_3286"/>
<dbReference type="eggNOG" id="COG0352">
    <property type="taxonomic scope" value="Bacteria"/>
</dbReference>
<dbReference type="HOGENOM" id="CLU_018272_3_2_0"/>
<dbReference type="OrthoDB" id="9812206at2"/>
<dbReference type="UniPathway" id="UPA00060">
    <property type="reaction ID" value="UER00141"/>
</dbReference>
<dbReference type="Proteomes" id="UP000002432">
    <property type="component" value="Chromosome"/>
</dbReference>
<dbReference type="GO" id="GO:0005737">
    <property type="term" value="C:cytoplasm"/>
    <property type="evidence" value="ECO:0007669"/>
    <property type="project" value="TreeGrafter"/>
</dbReference>
<dbReference type="GO" id="GO:0000287">
    <property type="term" value="F:magnesium ion binding"/>
    <property type="evidence" value="ECO:0007669"/>
    <property type="project" value="UniProtKB-UniRule"/>
</dbReference>
<dbReference type="GO" id="GO:0004789">
    <property type="term" value="F:thiamine-phosphate diphosphorylase activity"/>
    <property type="evidence" value="ECO:0007669"/>
    <property type="project" value="UniProtKB-UniRule"/>
</dbReference>
<dbReference type="GO" id="GO:0009228">
    <property type="term" value="P:thiamine biosynthetic process"/>
    <property type="evidence" value="ECO:0007669"/>
    <property type="project" value="UniProtKB-KW"/>
</dbReference>
<dbReference type="GO" id="GO:0009229">
    <property type="term" value="P:thiamine diphosphate biosynthetic process"/>
    <property type="evidence" value="ECO:0007669"/>
    <property type="project" value="UniProtKB-UniRule"/>
</dbReference>
<dbReference type="CDD" id="cd00564">
    <property type="entry name" value="TMP_TenI"/>
    <property type="match status" value="1"/>
</dbReference>
<dbReference type="Gene3D" id="3.20.20.70">
    <property type="entry name" value="Aldolase class I"/>
    <property type="match status" value="1"/>
</dbReference>
<dbReference type="HAMAP" id="MF_00097">
    <property type="entry name" value="TMP_synthase"/>
    <property type="match status" value="1"/>
</dbReference>
<dbReference type="InterPro" id="IPR013785">
    <property type="entry name" value="Aldolase_TIM"/>
</dbReference>
<dbReference type="InterPro" id="IPR036206">
    <property type="entry name" value="ThiamineP_synth_sf"/>
</dbReference>
<dbReference type="InterPro" id="IPR022998">
    <property type="entry name" value="ThiamineP_synth_TenI"/>
</dbReference>
<dbReference type="InterPro" id="IPR034291">
    <property type="entry name" value="TMP_synthase"/>
</dbReference>
<dbReference type="NCBIfam" id="TIGR00693">
    <property type="entry name" value="thiE"/>
    <property type="match status" value="1"/>
</dbReference>
<dbReference type="PANTHER" id="PTHR20857">
    <property type="entry name" value="THIAMINE-PHOSPHATE PYROPHOSPHORYLASE"/>
    <property type="match status" value="1"/>
</dbReference>
<dbReference type="PANTHER" id="PTHR20857:SF15">
    <property type="entry name" value="THIAMINE-PHOSPHATE SYNTHASE"/>
    <property type="match status" value="1"/>
</dbReference>
<dbReference type="Pfam" id="PF02581">
    <property type="entry name" value="TMP-TENI"/>
    <property type="match status" value="1"/>
</dbReference>
<dbReference type="SUPFAM" id="SSF51391">
    <property type="entry name" value="Thiamin phosphate synthase"/>
    <property type="match status" value="1"/>
</dbReference>